<gene>
    <name type="primary">Ccne1</name>
    <name type="synonym">Ccne</name>
</gene>
<dbReference type="EMBL" id="D14015">
    <property type="protein sequence ID" value="BAA03116.1"/>
    <property type="status" value="ALT_FRAME"/>
    <property type="molecule type" value="mRNA"/>
</dbReference>
<dbReference type="EMBL" id="D63164">
    <property type="protein sequence ID" value="BAA09640.1"/>
    <property type="molecule type" value="mRNA"/>
</dbReference>
<dbReference type="SMR" id="P39949"/>
<dbReference type="ComplexPortal" id="CPX-2083">
    <property type="entry name" value="Cyclin E1-CDK2 complex"/>
</dbReference>
<dbReference type="DIP" id="DIP-29865N"/>
<dbReference type="FunCoup" id="P39949">
    <property type="interactions" value="789"/>
</dbReference>
<dbReference type="IntAct" id="P39949">
    <property type="interactions" value="1"/>
</dbReference>
<dbReference type="STRING" id="10116.ENSRNOP00000020014"/>
<dbReference type="PhosphoSitePlus" id="P39949"/>
<dbReference type="PaxDb" id="10116-ENSRNOP00000020014"/>
<dbReference type="AGR" id="RGD:2294"/>
<dbReference type="RGD" id="2294">
    <property type="gene designation" value="Ccne1"/>
</dbReference>
<dbReference type="eggNOG" id="KOG0655">
    <property type="taxonomic scope" value="Eukaryota"/>
</dbReference>
<dbReference type="InParanoid" id="P39949"/>
<dbReference type="OrthoDB" id="5590282at2759"/>
<dbReference type="PhylomeDB" id="P39949"/>
<dbReference type="Reactome" id="R-RNO-1538133">
    <property type="pathway name" value="G0 and Early G1"/>
</dbReference>
<dbReference type="Reactome" id="R-RNO-187577">
    <property type="pathway name" value="SCF(Skp2)-mediated degradation of p27/p21"/>
</dbReference>
<dbReference type="Reactome" id="R-RNO-2559586">
    <property type="pathway name" value="DNA Damage/Telomere Stress Induced Senescence"/>
</dbReference>
<dbReference type="Reactome" id="R-RNO-6804116">
    <property type="pathway name" value="TP53 Regulates Transcription of Genes Involved in G1 Cell Cycle Arrest"/>
</dbReference>
<dbReference type="Reactome" id="R-RNO-69017">
    <property type="pathway name" value="CDK-mediated phosphorylation and removal of Cdc6"/>
</dbReference>
<dbReference type="Reactome" id="R-RNO-69200">
    <property type="pathway name" value="Phosphorylation of proteins involved in G1/S transition by active Cyclin E:Cdk2 complexes"/>
</dbReference>
<dbReference type="Reactome" id="R-RNO-69202">
    <property type="pathway name" value="Cyclin E associated events during G1/S transition"/>
</dbReference>
<dbReference type="Reactome" id="R-RNO-69231">
    <property type="pathway name" value="Cyclin D associated events in G1"/>
</dbReference>
<dbReference type="Reactome" id="R-RNO-69563">
    <property type="pathway name" value="p53-Dependent G1 DNA Damage Response"/>
</dbReference>
<dbReference type="Reactome" id="R-RNO-8849470">
    <property type="pathway name" value="PTK6 Regulates Cell Cycle"/>
</dbReference>
<dbReference type="Reactome" id="R-RNO-9706019">
    <property type="pathway name" value="RHOBTB3 ATPase cycle"/>
</dbReference>
<dbReference type="PRO" id="PR:P39949"/>
<dbReference type="Proteomes" id="UP000002494">
    <property type="component" value="Unplaced"/>
</dbReference>
<dbReference type="GO" id="GO:0005813">
    <property type="term" value="C:centrosome"/>
    <property type="evidence" value="ECO:0000314"/>
    <property type="project" value="RGD"/>
</dbReference>
<dbReference type="GO" id="GO:0097134">
    <property type="term" value="C:cyclin E1-CDK2 complex"/>
    <property type="evidence" value="ECO:0000266"/>
    <property type="project" value="RGD"/>
</dbReference>
<dbReference type="GO" id="GO:0000307">
    <property type="term" value="C:cyclin-dependent protein kinase holoenzyme complex"/>
    <property type="evidence" value="ECO:0000266"/>
    <property type="project" value="RGD"/>
</dbReference>
<dbReference type="GO" id="GO:0005737">
    <property type="term" value="C:cytoplasm"/>
    <property type="evidence" value="ECO:0000318"/>
    <property type="project" value="GO_Central"/>
</dbReference>
<dbReference type="GO" id="GO:0005815">
    <property type="term" value="C:microtubule organizing center"/>
    <property type="evidence" value="ECO:0000318"/>
    <property type="project" value="GO_Central"/>
</dbReference>
<dbReference type="GO" id="GO:0005634">
    <property type="term" value="C:nucleus"/>
    <property type="evidence" value="ECO:0000266"/>
    <property type="project" value="RGD"/>
</dbReference>
<dbReference type="GO" id="GO:0016538">
    <property type="term" value="F:cyclin-dependent protein serine/threonine kinase regulator activity"/>
    <property type="evidence" value="ECO:0000266"/>
    <property type="project" value="RGD"/>
</dbReference>
<dbReference type="GO" id="GO:0016301">
    <property type="term" value="F:kinase activity"/>
    <property type="evidence" value="ECO:0000266"/>
    <property type="project" value="RGD"/>
</dbReference>
<dbReference type="GO" id="GO:0019901">
    <property type="term" value="F:protein kinase binding"/>
    <property type="evidence" value="ECO:0000353"/>
    <property type="project" value="RGD"/>
</dbReference>
<dbReference type="GO" id="GO:0044877">
    <property type="term" value="F:protein-containing complex binding"/>
    <property type="evidence" value="ECO:0000353"/>
    <property type="project" value="RGD"/>
</dbReference>
<dbReference type="GO" id="GO:0031100">
    <property type="term" value="P:animal organ regeneration"/>
    <property type="evidence" value="ECO:0000270"/>
    <property type="project" value="RGD"/>
</dbReference>
<dbReference type="GO" id="GO:0001547">
    <property type="term" value="P:antral ovarian follicle growth"/>
    <property type="evidence" value="ECO:0000270"/>
    <property type="project" value="RGD"/>
</dbReference>
<dbReference type="GO" id="GO:0051301">
    <property type="term" value="P:cell division"/>
    <property type="evidence" value="ECO:0007669"/>
    <property type="project" value="UniProtKB-KW"/>
</dbReference>
<dbReference type="GO" id="GO:0031670">
    <property type="term" value="P:cellular response to nutrient"/>
    <property type="evidence" value="ECO:0000270"/>
    <property type="project" value="RGD"/>
</dbReference>
<dbReference type="GO" id="GO:0070192">
    <property type="term" value="P:chromosome organization involved in meiotic cell cycle"/>
    <property type="evidence" value="ECO:0000266"/>
    <property type="project" value="RGD"/>
</dbReference>
<dbReference type="GO" id="GO:0006270">
    <property type="term" value="P:DNA replication initiation"/>
    <property type="evidence" value="ECO:0000266"/>
    <property type="project" value="RGD"/>
</dbReference>
<dbReference type="GO" id="GO:0000082">
    <property type="term" value="P:G1/S transition of mitotic cell cycle"/>
    <property type="evidence" value="ECO:0000266"/>
    <property type="project" value="RGD"/>
</dbReference>
<dbReference type="GO" id="GO:0007129">
    <property type="term" value="P:homologous chromosome pairing at meiosis"/>
    <property type="evidence" value="ECO:0000266"/>
    <property type="project" value="RGD"/>
</dbReference>
<dbReference type="GO" id="GO:0001889">
    <property type="term" value="P:liver development"/>
    <property type="evidence" value="ECO:0000270"/>
    <property type="project" value="RGD"/>
</dbReference>
<dbReference type="GO" id="GO:0000122">
    <property type="term" value="P:negative regulation of transcription by RNA polymerase II"/>
    <property type="evidence" value="ECO:0000266"/>
    <property type="project" value="RGD"/>
</dbReference>
<dbReference type="GO" id="GO:0045597">
    <property type="term" value="P:positive regulation of cell differentiation"/>
    <property type="evidence" value="ECO:0000314"/>
    <property type="project" value="RGD"/>
</dbReference>
<dbReference type="GO" id="GO:1900087">
    <property type="term" value="P:positive regulation of G1/S transition of mitotic cell cycle"/>
    <property type="evidence" value="ECO:0000318"/>
    <property type="project" value="GO_Central"/>
</dbReference>
<dbReference type="GO" id="GO:1902462">
    <property type="term" value="P:positive regulation of mesenchymal stem cell proliferation"/>
    <property type="evidence" value="ECO:0000266"/>
    <property type="project" value="RGD"/>
</dbReference>
<dbReference type="GO" id="GO:0051726">
    <property type="term" value="P:regulation of cell cycle"/>
    <property type="evidence" value="ECO:0000266"/>
    <property type="project" value="RGD"/>
</dbReference>
<dbReference type="GO" id="GO:0032880">
    <property type="term" value="P:regulation of protein localization"/>
    <property type="evidence" value="ECO:0000266"/>
    <property type="project" value="RGD"/>
</dbReference>
<dbReference type="GO" id="GO:0051412">
    <property type="term" value="P:response to corticosterone"/>
    <property type="evidence" value="ECO:0000270"/>
    <property type="project" value="RGD"/>
</dbReference>
<dbReference type="GO" id="GO:0034097">
    <property type="term" value="P:response to cytokine"/>
    <property type="evidence" value="ECO:0000270"/>
    <property type="project" value="RGD"/>
</dbReference>
<dbReference type="GO" id="GO:0032355">
    <property type="term" value="P:response to estradiol"/>
    <property type="evidence" value="ECO:0000270"/>
    <property type="project" value="RGD"/>
</dbReference>
<dbReference type="GO" id="GO:0045471">
    <property type="term" value="P:response to ethanol"/>
    <property type="evidence" value="ECO:0000270"/>
    <property type="project" value="RGD"/>
</dbReference>
<dbReference type="GO" id="GO:0051597">
    <property type="term" value="P:response to methylmercury"/>
    <property type="evidence" value="ECO:0000270"/>
    <property type="project" value="RGD"/>
</dbReference>
<dbReference type="GO" id="GO:0032570">
    <property type="term" value="P:response to progesterone"/>
    <property type="evidence" value="ECO:0000270"/>
    <property type="project" value="RGD"/>
</dbReference>
<dbReference type="GO" id="GO:0014074">
    <property type="term" value="P:response to purine-containing compound"/>
    <property type="evidence" value="ECO:0000270"/>
    <property type="project" value="RGD"/>
</dbReference>
<dbReference type="GO" id="GO:0048545">
    <property type="term" value="P:response to steroid hormone"/>
    <property type="evidence" value="ECO:0000270"/>
    <property type="project" value="RGD"/>
</dbReference>
<dbReference type="GO" id="GO:0033197">
    <property type="term" value="P:response to vitamin E"/>
    <property type="evidence" value="ECO:0000270"/>
    <property type="project" value="RGD"/>
</dbReference>
<dbReference type="GO" id="GO:0009410">
    <property type="term" value="P:response to xenobiotic stimulus"/>
    <property type="evidence" value="ECO:0000270"/>
    <property type="project" value="RGD"/>
</dbReference>
<dbReference type="GO" id="GO:0000723">
    <property type="term" value="P:telomere maintenance"/>
    <property type="evidence" value="ECO:0000266"/>
    <property type="project" value="RGD"/>
</dbReference>
<dbReference type="GO" id="GO:0016055">
    <property type="term" value="P:Wnt signaling pathway"/>
    <property type="evidence" value="ECO:0000266"/>
    <property type="project" value="RGD"/>
</dbReference>
<dbReference type="CDD" id="cd20581">
    <property type="entry name" value="CYCLIN_CCNE1_rpt2"/>
    <property type="match status" value="1"/>
</dbReference>
<dbReference type="FunFam" id="1.10.472.10:FF:000024">
    <property type="entry name" value="G1/S-specific cyclin-E1"/>
    <property type="match status" value="1"/>
</dbReference>
<dbReference type="FunFam" id="1.10.472.10:FF:000140">
    <property type="entry name" value="G1/S-specific cyclin-E1"/>
    <property type="match status" value="1"/>
</dbReference>
<dbReference type="Gene3D" id="1.10.472.10">
    <property type="entry name" value="Cyclin-like"/>
    <property type="match status" value="2"/>
</dbReference>
<dbReference type="InterPro" id="IPR039361">
    <property type="entry name" value="Cyclin"/>
</dbReference>
<dbReference type="InterPro" id="IPR013763">
    <property type="entry name" value="Cyclin-like_dom"/>
</dbReference>
<dbReference type="InterPro" id="IPR036915">
    <property type="entry name" value="Cyclin-like_sf"/>
</dbReference>
<dbReference type="InterPro" id="IPR004367">
    <property type="entry name" value="Cyclin_C-dom"/>
</dbReference>
<dbReference type="InterPro" id="IPR006671">
    <property type="entry name" value="Cyclin_N"/>
</dbReference>
<dbReference type="InterPro" id="IPR048258">
    <property type="entry name" value="Cyclins_cyclin-box"/>
</dbReference>
<dbReference type="PANTHER" id="PTHR10177">
    <property type="entry name" value="CYCLINS"/>
    <property type="match status" value="1"/>
</dbReference>
<dbReference type="Pfam" id="PF02984">
    <property type="entry name" value="Cyclin_C"/>
    <property type="match status" value="1"/>
</dbReference>
<dbReference type="Pfam" id="PF00134">
    <property type="entry name" value="Cyclin_N"/>
    <property type="match status" value="1"/>
</dbReference>
<dbReference type="SMART" id="SM00385">
    <property type="entry name" value="CYCLIN"/>
    <property type="match status" value="1"/>
</dbReference>
<dbReference type="SMART" id="SM01332">
    <property type="entry name" value="Cyclin_C"/>
    <property type="match status" value="1"/>
</dbReference>
<dbReference type="SUPFAM" id="SSF47954">
    <property type="entry name" value="Cyclin-like"/>
    <property type="match status" value="2"/>
</dbReference>
<dbReference type="PROSITE" id="PS00292">
    <property type="entry name" value="CYCLINS"/>
    <property type="match status" value="1"/>
</dbReference>
<keyword id="KW-0131">Cell cycle</keyword>
<keyword id="KW-0132">Cell division</keyword>
<keyword id="KW-0195">Cyclin</keyword>
<keyword id="KW-0539">Nucleus</keyword>
<keyword id="KW-0597">Phosphoprotein</keyword>
<keyword id="KW-1185">Reference proteome</keyword>
<keyword id="KW-0832">Ubl conjugation</keyword>
<sequence>MPRERKERDSKDHTKMKEEGGSDLSVRSRKRKPNVPVFLQDPDEEIAKIDKTVKSQDSSQPWDDDSACVDPCSFIPTPNKEEDNELEYPKTAFQPRKIRPPRASPLPVLNWANREEVWRIMLNKEKTYLRDEHFLQRHPLLQARMRAVLLDWLMEVCEVYKLHRETFYLAQDFFDRYMASQQNIIKTLLQLIGISALFIASKLEEIYPPKLHQFAYVTDGACSGDEILTMELMMMKALKWRLSPLTIVSWLNVYVQVAYVNDTGEVLMPQYPQQVFVQIAELLDLCVLDVGCLEFPYGVLAASALYHFSSLELMQKVSGYQWCDIEKCVKWMVPFAMVIREMGSSKLKHFRGVPMEDSHNIQTHTNSLDLLDKAQAKKAILSEQNRISPPPSGVLTPPHSSKKQSSEQETE</sequence>
<organism>
    <name type="scientific">Rattus norvegicus</name>
    <name type="common">Rat</name>
    <dbReference type="NCBI Taxonomy" id="10116"/>
    <lineage>
        <taxon>Eukaryota</taxon>
        <taxon>Metazoa</taxon>
        <taxon>Chordata</taxon>
        <taxon>Craniata</taxon>
        <taxon>Vertebrata</taxon>
        <taxon>Euteleostomi</taxon>
        <taxon>Mammalia</taxon>
        <taxon>Eutheria</taxon>
        <taxon>Euarchontoglires</taxon>
        <taxon>Glires</taxon>
        <taxon>Rodentia</taxon>
        <taxon>Myomorpha</taxon>
        <taxon>Muroidea</taxon>
        <taxon>Muridae</taxon>
        <taxon>Murinae</taxon>
        <taxon>Rattus</taxon>
    </lineage>
</organism>
<proteinExistence type="evidence at protein level"/>
<name>CCNE1_RAT</name>
<accession>P39949</accession>
<accession>O09138</accession>
<comment type="function">
    <text>Essential for the control of the cell cycle at the G1/S (start) transition.</text>
</comment>
<comment type="subunit">
    <text evidence="1 2">Interacts with CDK2 protein kinase to form a serine/threonine kinase holoenzyme complex. The cyclin subunit imparts substrate specificity to the complex. Found in a complex with CDK2, CABLES1 and CCNA1. Part of a complex consisting of UHRF2, CDK2 and CCNE1. Interacts directly with UHRF2; the interaction ubiquitinates CCNE1 and appears to occur independently of CCNE1 phosphorylation. Interacts with INCA1 (By similarity).</text>
</comment>
<comment type="interaction">
    <interactant intactId="EBI-847441">
        <id>P39949</id>
    </interactant>
    <interactant intactId="EBI-919194">
        <id>Q6PEC4</id>
        <label>Skp1</label>
    </interactant>
    <organismsDiffer>false</organismsDiffer>
    <experiments>2</experiments>
</comment>
<comment type="subcellular location">
    <subcellularLocation>
        <location evidence="1">Nucleus</location>
    </subcellularLocation>
</comment>
<comment type="PTM">
    <text evidence="1">Phosphorylation of both Thr-396 by GSK3 and Ser-400 by CDK2 creates a high affinity degron recognized by FBXW7, and accelerates degradation via the ubiquitin proteasome pathway. Phosphorylation at Thr-77 creates a low affinity degron also recognized by FBXW7 (By similarity).</text>
</comment>
<comment type="PTM">
    <text evidence="1">Ubiquitinated by UHRF2; appears to occur independently of phosphorylation.</text>
</comment>
<comment type="similarity">
    <text evidence="4">Belongs to the cyclin family. Cyclin E subfamily.</text>
</comment>
<comment type="sequence caution" evidence="4">
    <conflict type="frameshift">
        <sequence resource="EMBL-CDS" id="BAA03116"/>
    </conflict>
</comment>
<evidence type="ECO:0000250" key="1">
    <source>
        <dbReference type="UniProtKB" id="P24864"/>
    </source>
</evidence>
<evidence type="ECO:0000250" key="2">
    <source>
        <dbReference type="UniProtKB" id="Q61457"/>
    </source>
</evidence>
<evidence type="ECO:0000256" key="3">
    <source>
        <dbReference type="SAM" id="MobiDB-lite"/>
    </source>
</evidence>
<evidence type="ECO:0000305" key="4"/>
<reference key="1">
    <citation type="journal article" date="1993" name="Oncogene">
        <title>Cyclin G: a new mammalian cyclin with homology to fission yeast Cig1.</title>
        <authorList>
            <person name="Tamura K."/>
            <person name="Kanaoka Y."/>
            <person name="Jinno S."/>
            <person name="Nagata A."/>
            <person name="Ogiso Y."/>
            <person name="Shimizu K."/>
            <person name="Hayakawa T."/>
            <person name="Nojima H."/>
            <person name="Okayama H."/>
        </authorList>
    </citation>
    <scope>NUCLEOTIDE SEQUENCE [MRNA]</scope>
    <source>
        <tissue>Kidney</tissue>
    </source>
</reference>
<reference key="2">
    <citation type="journal article" date="1995" name="Biochem. Mol. Biol. Int.">
        <title>Synergistic gene expressions of cyclin E, cdk2, cdk5 and E2F-1 during the prolactin-induced G1/S transition in rat Nb2 pre-T lymphoma cells.</title>
        <authorList>
            <person name="Hosokawa Y."/>
            <person name="Yang M."/>
            <person name="Kaneko S."/>
            <person name="Tanaka M."/>
            <person name="Nakashima K."/>
        </authorList>
    </citation>
    <scope>NUCLEOTIDE SEQUENCE [MRNA] OF 152-222</scope>
</reference>
<protein>
    <recommendedName>
        <fullName>G1/S-specific cyclin-E1</fullName>
    </recommendedName>
</protein>
<feature type="chain" id="PRO_0000080451" description="G1/S-specific cyclin-E1">
    <location>
        <begin position="1"/>
        <end position="411"/>
    </location>
</feature>
<feature type="region of interest" description="Disordered" evidence="3">
    <location>
        <begin position="1"/>
        <end position="44"/>
    </location>
</feature>
<feature type="region of interest" description="Disordered" evidence="3">
    <location>
        <begin position="381"/>
        <end position="411"/>
    </location>
</feature>
<feature type="compositionally biased region" description="Basic and acidic residues" evidence="3">
    <location>
        <begin position="1"/>
        <end position="20"/>
    </location>
</feature>
<feature type="modified residue" description="Phosphothreonine" evidence="1">
    <location>
        <position position="77"/>
    </location>
</feature>
<feature type="modified residue" description="Phosphoserine" evidence="1">
    <location>
        <position position="104"/>
    </location>
</feature>
<feature type="modified residue" description="Phosphoserine" evidence="1">
    <location>
        <position position="388"/>
    </location>
</feature>
<feature type="modified residue" description="Phosphothreonine" evidence="1">
    <location>
        <position position="396"/>
    </location>
</feature>
<feature type="modified residue" description="Phosphoserine" evidence="1">
    <location>
        <position position="400"/>
    </location>
</feature>
<feature type="sequence conflict" description="In Ref. 2; BAA09640." evidence="4" ref="2">
    <original>A</original>
    <variation>T</variation>
    <location>
        <position position="221"/>
    </location>
</feature>